<reference key="1">
    <citation type="submission" date="2004-04" db="EMBL/GenBank/DDBJ databases">
        <title>Molecular cloning and characterization of chimpanzee Znf313 gene.</title>
        <authorList>
            <person name="Ma Y.-X."/>
            <person name="Wu Q."/>
            <person name="Zhang S."/>
            <person name="Sun Y."/>
            <person name="Wang C."/>
            <person name="Liu Y."/>
            <person name="He G."/>
            <person name="Dong J."/>
            <person name="Hong Z."/>
            <person name="Peng Y."/>
        </authorList>
    </citation>
    <scope>NUCLEOTIDE SEQUENCE [MRNA]</scope>
    <source>
        <tissue>Testis</tissue>
    </source>
</reference>
<keyword id="KW-0007">Acetylation</keyword>
<keyword id="KW-0963">Cytoplasm</keyword>
<keyword id="KW-0217">Developmental protein</keyword>
<keyword id="KW-0221">Differentiation</keyword>
<keyword id="KW-0479">Metal-binding</keyword>
<keyword id="KW-0539">Nucleus</keyword>
<keyword id="KW-1185">Reference proteome</keyword>
<keyword id="KW-0744">Spermatogenesis</keyword>
<keyword id="KW-0808">Transferase</keyword>
<keyword id="KW-0832">Ubl conjugation</keyword>
<keyword id="KW-0833">Ubl conjugation pathway</keyword>
<keyword id="KW-0862">Zinc</keyword>
<keyword id="KW-0863">Zinc-finger</keyword>
<sequence>MAAQQRDCGGAAQLAGPAAEADPLGRFTCPVCLEVYEKPVQVPCGHVFCSACLQECLKPKKPVCGVCRSALAPGVRAVELERQIESTETSCHGCRKKFFLSKIRSHVATCSKYQNYIMEGVKATIKDASLQPRNVPNRYTFPCPYCPEKNFDQEGLVEHCKLFHSTDTKSVVCPICASMPWGDPNYRSANFREHIQRRHRFSYDTFVDYDVDEEDMMNQVLQRSIIDQ</sequence>
<accession>Q6J212</accession>
<name>RN114_PANTR</name>
<feature type="chain" id="PRO_0000056309" description="E3 ubiquitin-protein ligase RNF114">
    <location>
        <begin position="1"/>
        <end position="228"/>
    </location>
</feature>
<feature type="zinc finger region" description="RING-type" evidence="2">
    <location>
        <begin position="29"/>
        <end position="68"/>
    </location>
</feature>
<feature type="zinc finger region" description="C2HC RNF-type" evidence="3">
    <location>
        <begin position="91"/>
        <end position="110"/>
    </location>
</feature>
<feature type="binding site" evidence="3">
    <location>
        <position position="91"/>
    </location>
    <ligand>
        <name>Zn(2+)</name>
        <dbReference type="ChEBI" id="CHEBI:29105"/>
    </ligand>
</feature>
<feature type="binding site" evidence="3">
    <location>
        <position position="94"/>
    </location>
    <ligand>
        <name>Zn(2+)</name>
        <dbReference type="ChEBI" id="CHEBI:29105"/>
    </ligand>
</feature>
<feature type="binding site" evidence="3">
    <location>
        <position position="106"/>
    </location>
    <ligand>
        <name>Zn(2+)</name>
        <dbReference type="ChEBI" id="CHEBI:29105"/>
    </ligand>
</feature>
<feature type="binding site" evidence="3">
    <location>
        <position position="110"/>
    </location>
    <ligand>
        <name>Zn(2+)</name>
        <dbReference type="ChEBI" id="CHEBI:29105"/>
    </ligand>
</feature>
<feature type="modified residue" description="N6-acetyllysine" evidence="1">
    <location>
        <position position="102"/>
    </location>
</feature>
<feature type="modified residue" description="N6-acetyllysine" evidence="1">
    <location>
        <position position="112"/>
    </location>
</feature>
<proteinExistence type="evidence at transcript level"/>
<gene>
    <name type="primary">RNF114</name>
    <name type="synonym">ZNF313</name>
</gene>
<comment type="function">
    <text evidence="1">E3 ubiquitin-protein ligase that promotes the ubiquitination of various substrates. In turn, participates in the regulation of many biological processes including cell cycle, apoptosis, osteoclastogenesis as well as innate or adaptive immunity. Acts as negative regulator of NF-kappa-B-dependent transcription by promoting the ubiquitination and stabilization of the NF-kappa-B inhibitor TNFAIP3. May promote the ubiquitination of TRAF6 as well. Also acts as a negative regulator of T-cell activation. Inhibits cellular dsRNA responses and interferon production by targeting MAVS component for proteasomal degradation. Ubiquitinates the CDK inhibitor CDKN1A leading to its degradationand probably also CDKN1B and CDKN1C. This activity stimulates cell cycle G1-to-S phase transition and suppresses cellular senescence. May play a role in spermatogenesis.</text>
</comment>
<comment type="catalytic activity">
    <reaction evidence="1">
        <text>S-ubiquitinyl-[E2 ubiquitin-conjugating enzyme]-L-cysteine + [acceptor protein]-L-lysine = [E2 ubiquitin-conjugating enzyme]-L-cysteine + N(6)-ubiquitinyl-[acceptor protein]-L-lysine.</text>
        <dbReference type="EC" id="2.3.2.27"/>
    </reaction>
</comment>
<comment type="pathway">
    <text evidence="1">Protein modification; protein ubiquitination.</text>
</comment>
<comment type="subunit">
    <text evidence="1">Interacts with XAF1, the interaction increases XAF1 stability and proapoptotic effects, and may regulate IFN signaling.</text>
</comment>
<comment type="subcellular location">
    <subcellularLocation>
        <location evidence="1">Cytoplasm</location>
    </subcellularLocation>
    <subcellularLocation>
        <location evidence="1">Nucleus</location>
    </subcellularLocation>
</comment>
<comment type="PTM">
    <text evidence="1">Autoubiquitinated. Polyubiquitinated in the presence of E2 enzymes UBE2D1, UBE2D2 and UBE2D3, but only monoubiquitinated in the presence of UBE2E1.</text>
</comment>
<evidence type="ECO:0000250" key="1">
    <source>
        <dbReference type="UniProtKB" id="Q9Y508"/>
    </source>
</evidence>
<evidence type="ECO:0000255" key="2">
    <source>
        <dbReference type="PROSITE-ProRule" id="PRU00175"/>
    </source>
</evidence>
<evidence type="ECO:0000255" key="3">
    <source>
        <dbReference type="PROSITE-ProRule" id="PRU01144"/>
    </source>
</evidence>
<evidence type="ECO:0000305" key="4"/>
<protein>
    <recommendedName>
        <fullName>E3 ubiquitin-protein ligase RNF114</fullName>
        <ecNumber evidence="1">2.3.2.27</ecNumber>
    </recommendedName>
    <alternativeName>
        <fullName>RING finger protein 114</fullName>
    </alternativeName>
    <alternativeName>
        <fullName evidence="4">RING-type E3 ubiquitin transferase RNF114</fullName>
    </alternativeName>
    <alternativeName>
        <fullName>Zinc finger protein 313</fullName>
    </alternativeName>
</protein>
<organism>
    <name type="scientific">Pan troglodytes</name>
    <name type="common">Chimpanzee</name>
    <dbReference type="NCBI Taxonomy" id="9598"/>
    <lineage>
        <taxon>Eukaryota</taxon>
        <taxon>Metazoa</taxon>
        <taxon>Chordata</taxon>
        <taxon>Craniata</taxon>
        <taxon>Vertebrata</taxon>
        <taxon>Euteleostomi</taxon>
        <taxon>Mammalia</taxon>
        <taxon>Eutheria</taxon>
        <taxon>Euarchontoglires</taxon>
        <taxon>Primates</taxon>
        <taxon>Haplorrhini</taxon>
        <taxon>Catarrhini</taxon>
        <taxon>Hominidae</taxon>
        <taxon>Pan</taxon>
    </lineage>
</organism>
<dbReference type="EC" id="2.3.2.27" evidence="1"/>
<dbReference type="EMBL" id="AY604723">
    <property type="protein sequence ID" value="AAT38454.1"/>
    <property type="molecule type" value="Transcribed_RNA"/>
</dbReference>
<dbReference type="RefSeq" id="NP_001120978.1">
    <property type="nucleotide sequence ID" value="NM_001127506.1"/>
</dbReference>
<dbReference type="STRING" id="9598.ENSPTRP00000023416"/>
<dbReference type="PaxDb" id="9598-ENSPTRP00000023416"/>
<dbReference type="GeneID" id="470029"/>
<dbReference type="KEGG" id="ptr:470029"/>
<dbReference type="CTD" id="55905"/>
<dbReference type="eggNOG" id="ENOG502QW3F">
    <property type="taxonomic scope" value="Eukaryota"/>
</dbReference>
<dbReference type="InParanoid" id="Q6J212"/>
<dbReference type="OrthoDB" id="3214at9604"/>
<dbReference type="UniPathway" id="UPA00143"/>
<dbReference type="Proteomes" id="UP000002277">
    <property type="component" value="Unplaced"/>
</dbReference>
<dbReference type="GO" id="GO:0005737">
    <property type="term" value="C:cytoplasm"/>
    <property type="evidence" value="ECO:0007669"/>
    <property type="project" value="UniProtKB-SubCell"/>
</dbReference>
<dbReference type="GO" id="GO:0005634">
    <property type="term" value="C:nucleus"/>
    <property type="evidence" value="ECO:0007669"/>
    <property type="project" value="UniProtKB-SubCell"/>
</dbReference>
<dbReference type="GO" id="GO:0061630">
    <property type="term" value="F:ubiquitin protein ligase activity"/>
    <property type="evidence" value="ECO:0000318"/>
    <property type="project" value="GO_Central"/>
</dbReference>
<dbReference type="GO" id="GO:0008270">
    <property type="term" value="F:zinc ion binding"/>
    <property type="evidence" value="ECO:0007669"/>
    <property type="project" value="UniProtKB-KW"/>
</dbReference>
<dbReference type="GO" id="GO:0030154">
    <property type="term" value="P:cell differentiation"/>
    <property type="evidence" value="ECO:0007669"/>
    <property type="project" value="UniProtKB-KW"/>
</dbReference>
<dbReference type="GO" id="GO:0000209">
    <property type="term" value="P:protein polyubiquitination"/>
    <property type="evidence" value="ECO:0000318"/>
    <property type="project" value="GO_Central"/>
</dbReference>
<dbReference type="GO" id="GO:0007283">
    <property type="term" value="P:spermatogenesis"/>
    <property type="evidence" value="ECO:0007669"/>
    <property type="project" value="UniProtKB-KW"/>
</dbReference>
<dbReference type="GO" id="GO:0006511">
    <property type="term" value="P:ubiquitin-dependent protein catabolic process"/>
    <property type="evidence" value="ECO:0000318"/>
    <property type="project" value="GO_Central"/>
</dbReference>
<dbReference type="CDD" id="cd16540">
    <property type="entry name" value="RING-HC_RNF114"/>
    <property type="match status" value="1"/>
</dbReference>
<dbReference type="FunFam" id="3.30.40.10:FF:000408">
    <property type="entry name" value="E3 ubiquitin-protein ligase RNF114"/>
    <property type="match status" value="1"/>
</dbReference>
<dbReference type="Gene3D" id="3.30.40.10">
    <property type="entry name" value="Zinc/RING finger domain, C3HC4 (zinc finger)"/>
    <property type="match status" value="1"/>
</dbReference>
<dbReference type="InterPro" id="IPR008598">
    <property type="entry name" value="Di19_Zn-bd"/>
</dbReference>
<dbReference type="InterPro" id="IPR042716">
    <property type="entry name" value="RNF114_RING-HC"/>
</dbReference>
<dbReference type="InterPro" id="IPR051438">
    <property type="entry name" value="RNF_E3_ubiq-protein_ligase"/>
</dbReference>
<dbReference type="InterPro" id="IPR034734">
    <property type="entry name" value="ZF_C2HC_RNF"/>
</dbReference>
<dbReference type="InterPro" id="IPR027370">
    <property type="entry name" value="Znf-RING_euk"/>
</dbReference>
<dbReference type="InterPro" id="IPR001841">
    <property type="entry name" value="Znf_RING"/>
</dbReference>
<dbReference type="InterPro" id="IPR013083">
    <property type="entry name" value="Znf_RING/FYVE/PHD"/>
</dbReference>
<dbReference type="InterPro" id="IPR017907">
    <property type="entry name" value="Znf_RING_CS"/>
</dbReference>
<dbReference type="PANTHER" id="PTHR46016:SF3">
    <property type="entry name" value="E3 UBIQUITIN-PROTEIN LIGASE RNF114"/>
    <property type="match status" value="1"/>
</dbReference>
<dbReference type="PANTHER" id="PTHR46016">
    <property type="entry name" value="ZINC FINGER, RING/FYVE/PHD-TYPE"/>
    <property type="match status" value="1"/>
</dbReference>
<dbReference type="Pfam" id="PF05605">
    <property type="entry name" value="zf-Di19"/>
    <property type="match status" value="1"/>
</dbReference>
<dbReference type="Pfam" id="PF13445">
    <property type="entry name" value="zf-RING_UBOX"/>
    <property type="match status" value="1"/>
</dbReference>
<dbReference type="Pfam" id="PF18574">
    <property type="entry name" value="zf_C2HC_14"/>
    <property type="match status" value="1"/>
</dbReference>
<dbReference type="SMART" id="SM00184">
    <property type="entry name" value="RING"/>
    <property type="match status" value="1"/>
</dbReference>
<dbReference type="SUPFAM" id="SSF57850">
    <property type="entry name" value="RING/U-box"/>
    <property type="match status" value="1"/>
</dbReference>
<dbReference type="PROSITE" id="PS51803">
    <property type="entry name" value="ZF_C2HC_RNF"/>
    <property type="match status" value="1"/>
</dbReference>
<dbReference type="PROSITE" id="PS00518">
    <property type="entry name" value="ZF_RING_1"/>
    <property type="match status" value="1"/>
</dbReference>
<dbReference type="PROSITE" id="PS50089">
    <property type="entry name" value="ZF_RING_2"/>
    <property type="match status" value="1"/>
</dbReference>